<name>HIUH_BRUME</name>
<organism>
    <name type="scientific">Brucella melitensis biotype 1 (strain ATCC 23456 / CCUG 17765 / NCTC 10094 / 16M)</name>
    <dbReference type="NCBI Taxonomy" id="224914"/>
    <lineage>
        <taxon>Bacteria</taxon>
        <taxon>Pseudomonadati</taxon>
        <taxon>Pseudomonadota</taxon>
        <taxon>Alphaproteobacteria</taxon>
        <taxon>Hyphomicrobiales</taxon>
        <taxon>Brucellaceae</taxon>
        <taxon>Brucella/Ochrobactrum group</taxon>
        <taxon>Brucella</taxon>
    </lineage>
</organism>
<sequence>MGKLSTHVLDTAHGTPAAAMRVELYRIAASGTPELLKRVVTNLDGRTDAPLLSGDEMRTGIYELQFHVAEYFEGRGAELAHEPFLDLIPIRFGIADEDGNYHVPLLVSPWSYSTYRGS</sequence>
<dbReference type="EC" id="3.5.2.17"/>
<dbReference type="EMBL" id="AE008917">
    <property type="protein sequence ID" value="AAL52610.1"/>
    <property type="status" value="ALT_INIT"/>
    <property type="molecule type" value="Genomic_DNA"/>
</dbReference>
<dbReference type="PIR" id="AG3430">
    <property type="entry name" value="AG3430"/>
</dbReference>
<dbReference type="SMR" id="Q8YFU1"/>
<dbReference type="KEGG" id="bme:BMEI1429"/>
<dbReference type="KEGG" id="bmel:DK63_2059"/>
<dbReference type="PATRIC" id="fig|224914.52.peg.2161"/>
<dbReference type="eggNOG" id="COG2351">
    <property type="taxonomic scope" value="Bacteria"/>
</dbReference>
<dbReference type="PhylomeDB" id="Q8YFU1"/>
<dbReference type="Proteomes" id="UP000000419">
    <property type="component" value="Chromosome I"/>
</dbReference>
<dbReference type="GO" id="GO:0033971">
    <property type="term" value="F:hydroxyisourate hydrolase activity"/>
    <property type="evidence" value="ECO:0007669"/>
    <property type="project" value="UniProtKB-EC"/>
</dbReference>
<dbReference type="GO" id="GO:0006144">
    <property type="term" value="P:purine nucleobase metabolic process"/>
    <property type="evidence" value="ECO:0007669"/>
    <property type="project" value="UniProtKB-KW"/>
</dbReference>
<dbReference type="CDD" id="cd05822">
    <property type="entry name" value="TLP_HIUase"/>
    <property type="match status" value="1"/>
</dbReference>
<dbReference type="FunFam" id="2.60.40.180:FF:000005">
    <property type="entry name" value="5-hydroxyisourate hydrolase"/>
    <property type="match status" value="1"/>
</dbReference>
<dbReference type="Gene3D" id="2.60.40.180">
    <property type="entry name" value="Transthyretin/hydroxyisourate hydrolase domain"/>
    <property type="match status" value="1"/>
</dbReference>
<dbReference type="InterPro" id="IPR014306">
    <property type="entry name" value="Hydroxyisourate_hydrolase"/>
</dbReference>
<dbReference type="InterPro" id="IPR023418">
    <property type="entry name" value="Thyroxine_BS"/>
</dbReference>
<dbReference type="InterPro" id="IPR000895">
    <property type="entry name" value="Transthyretin/HIU_hydrolase"/>
</dbReference>
<dbReference type="InterPro" id="IPR023416">
    <property type="entry name" value="Transthyretin/HIU_hydrolase_d"/>
</dbReference>
<dbReference type="InterPro" id="IPR036817">
    <property type="entry name" value="Transthyretin/HIU_hydrolase_sf"/>
</dbReference>
<dbReference type="InterPro" id="IPR023419">
    <property type="entry name" value="Transthyretin_CS"/>
</dbReference>
<dbReference type="NCBIfam" id="TIGR02962">
    <property type="entry name" value="hdxy_isourate"/>
    <property type="match status" value="1"/>
</dbReference>
<dbReference type="PANTHER" id="PTHR10395:SF7">
    <property type="entry name" value="5-HYDROXYISOURATE HYDROLASE"/>
    <property type="match status" value="1"/>
</dbReference>
<dbReference type="PANTHER" id="PTHR10395">
    <property type="entry name" value="URICASE AND TRANSTHYRETIN-RELATED"/>
    <property type="match status" value="1"/>
</dbReference>
<dbReference type="Pfam" id="PF00576">
    <property type="entry name" value="Transthyretin"/>
    <property type="match status" value="1"/>
</dbReference>
<dbReference type="PRINTS" id="PR00189">
    <property type="entry name" value="TRNSTHYRETIN"/>
</dbReference>
<dbReference type="SUPFAM" id="SSF49472">
    <property type="entry name" value="Transthyretin (synonym: prealbumin)"/>
    <property type="match status" value="1"/>
</dbReference>
<dbReference type="PROSITE" id="PS00768">
    <property type="entry name" value="TRANSTHYRETIN_1"/>
    <property type="match status" value="1"/>
</dbReference>
<dbReference type="PROSITE" id="PS00769">
    <property type="entry name" value="TRANSTHYRETIN_2"/>
    <property type="match status" value="1"/>
</dbReference>
<proteinExistence type="inferred from homology"/>
<keyword id="KW-0378">Hydrolase</keyword>
<keyword id="KW-0659">Purine metabolism</keyword>
<accession>Q8YFU1</accession>
<comment type="function">
    <text evidence="1">Catalyzes the hydrolysis of 5-hydroxyisourate (HIU) to 2-oxo-4-hydroxy-4-carboxy-5-ureidoimidazoline (OHCU).</text>
</comment>
<comment type="catalytic activity">
    <reaction>
        <text>5-hydroxyisourate + H2O = 5-hydroxy-2-oxo-4-ureido-2,5-dihydro-1H-imidazole-5-carboxylate + H(+)</text>
        <dbReference type="Rhea" id="RHEA:23736"/>
        <dbReference type="ChEBI" id="CHEBI:15377"/>
        <dbReference type="ChEBI" id="CHEBI:15378"/>
        <dbReference type="ChEBI" id="CHEBI:18072"/>
        <dbReference type="ChEBI" id="CHEBI:58639"/>
        <dbReference type="EC" id="3.5.2.17"/>
    </reaction>
</comment>
<comment type="subunit">
    <text evidence="1">Homotetramer.</text>
</comment>
<comment type="miscellaneous">
    <text>HIU hydrolysis also occurs spontaneously, but more slowly.</text>
</comment>
<comment type="similarity">
    <text evidence="2">Belongs to the transthyretin family. 5-hydroxyisourate hydrolase subfamily.</text>
</comment>
<comment type="sequence caution" evidence="2">
    <conflict type="erroneous initiation">
        <sequence resource="EMBL-CDS" id="AAL52610"/>
    </conflict>
</comment>
<feature type="chain" id="PRO_0000050609" description="5-hydroxyisourate hydrolase">
    <location>
        <begin position="1"/>
        <end position="118"/>
    </location>
</feature>
<feature type="binding site" evidence="1">
    <location>
        <position position="7"/>
    </location>
    <ligand>
        <name>substrate</name>
    </ligand>
</feature>
<feature type="binding site" evidence="1">
    <location>
        <position position="46"/>
    </location>
    <ligand>
        <name>substrate</name>
    </ligand>
</feature>
<feature type="binding site" evidence="1">
    <location>
        <position position="115"/>
    </location>
    <ligand>
        <name>substrate</name>
    </ligand>
</feature>
<protein>
    <recommendedName>
        <fullName>5-hydroxyisourate hydrolase</fullName>
        <shortName>HIU hydrolase</shortName>
        <shortName>HIUHase</shortName>
        <ecNumber>3.5.2.17</ecNumber>
    </recommendedName>
</protein>
<gene>
    <name type="ordered locus">BMEI1429</name>
</gene>
<evidence type="ECO:0000250" key="1"/>
<evidence type="ECO:0000305" key="2"/>
<reference key="1">
    <citation type="journal article" date="2002" name="Proc. Natl. Acad. Sci. U.S.A.">
        <title>The genome sequence of the facultative intracellular pathogen Brucella melitensis.</title>
        <authorList>
            <person name="DelVecchio V.G."/>
            <person name="Kapatral V."/>
            <person name="Redkar R.J."/>
            <person name="Patra G."/>
            <person name="Mujer C."/>
            <person name="Los T."/>
            <person name="Ivanova N."/>
            <person name="Anderson I."/>
            <person name="Bhattacharyya A."/>
            <person name="Lykidis A."/>
            <person name="Reznik G."/>
            <person name="Jablonski L."/>
            <person name="Larsen N."/>
            <person name="D'Souza M."/>
            <person name="Bernal A."/>
            <person name="Mazur M."/>
            <person name="Goltsman E."/>
            <person name="Selkov E."/>
            <person name="Elzer P.H."/>
            <person name="Hagius S."/>
            <person name="O'Callaghan D."/>
            <person name="Letesson J.-J."/>
            <person name="Haselkorn R."/>
            <person name="Kyrpides N.C."/>
            <person name="Overbeek R."/>
        </authorList>
    </citation>
    <scope>NUCLEOTIDE SEQUENCE [LARGE SCALE GENOMIC DNA]</scope>
    <source>
        <strain>ATCC 23456 / CCUG 17765 / NCTC 10094 / 16M</strain>
    </source>
</reference>